<accession>O52828</accession>
<evidence type="ECO:0000255" key="1">
    <source>
        <dbReference type="HAMAP-Rule" id="MF_00658"/>
    </source>
</evidence>
<sequence>MKIRILTIGQKMPAWVLTGFEDYFKRIQPFVQTQVIELPMAKRGKNDSDADILKYCQIEGESILAALKPNEVLIALEVGGRELSTEKLADTMKSWMLEGHDIALAIGGPDGLSDQVRKAAAWHWSLSKLTMPHPMVRILLIEQLYRAMSINHNHPYHRA</sequence>
<reference key="1">
    <citation type="submission" date="1998-03" db="EMBL/GenBank/DDBJ databases">
        <title>Sequence of the Lon-protease-locus from Acinetobacter sp. ADP1.</title>
        <authorList>
            <person name="Geissdoerfer W."/>
            <person name="Hillen W."/>
        </authorList>
    </citation>
    <scope>NUCLEOTIDE SEQUENCE [GENOMIC DNA]</scope>
</reference>
<reference key="2">
    <citation type="journal article" date="2004" name="Nucleic Acids Res.">
        <title>Unique features revealed by the genome sequence of Acinetobacter sp. ADP1, a versatile and naturally transformation competent bacterium.</title>
        <authorList>
            <person name="Barbe V."/>
            <person name="Vallenet D."/>
            <person name="Fonknechten N."/>
            <person name="Kreimeyer A."/>
            <person name="Oztas S."/>
            <person name="Labarre L."/>
            <person name="Cruveiller S."/>
            <person name="Robert C."/>
            <person name="Duprat S."/>
            <person name="Wincker P."/>
            <person name="Ornston L.N."/>
            <person name="Weissenbach J."/>
            <person name="Marliere P."/>
            <person name="Cohen G.N."/>
            <person name="Medigue C."/>
        </authorList>
    </citation>
    <scope>NUCLEOTIDE SEQUENCE [LARGE SCALE GENOMIC DNA]</scope>
    <source>
        <strain>ATCC 33305 / BD413 / ADP1</strain>
    </source>
</reference>
<dbReference type="EC" id="2.1.1.177" evidence="1"/>
<dbReference type="EMBL" id="AJ224767">
    <property type="protein sequence ID" value="CAA12121.1"/>
    <property type="molecule type" value="Genomic_DNA"/>
</dbReference>
<dbReference type="EMBL" id="CR543861">
    <property type="protein sequence ID" value="CAG67995.1"/>
    <property type="molecule type" value="Genomic_DNA"/>
</dbReference>
<dbReference type="RefSeq" id="WP_004921511.1">
    <property type="nucleotide sequence ID" value="NC_005966.1"/>
</dbReference>
<dbReference type="SMR" id="O52828"/>
<dbReference type="STRING" id="202950.GCA_001485005_01258"/>
<dbReference type="GeneID" id="45233545"/>
<dbReference type="KEGG" id="aci:ACIAD1113"/>
<dbReference type="eggNOG" id="COG1576">
    <property type="taxonomic scope" value="Bacteria"/>
</dbReference>
<dbReference type="HOGENOM" id="CLU_100552_1_0_6"/>
<dbReference type="OrthoDB" id="9806643at2"/>
<dbReference type="BioCyc" id="ASP62977:ACIAD_RS05105-MONOMER"/>
<dbReference type="Proteomes" id="UP000000430">
    <property type="component" value="Chromosome"/>
</dbReference>
<dbReference type="GO" id="GO:0005737">
    <property type="term" value="C:cytoplasm"/>
    <property type="evidence" value="ECO:0007669"/>
    <property type="project" value="UniProtKB-SubCell"/>
</dbReference>
<dbReference type="GO" id="GO:0070038">
    <property type="term" value="F:rRNA (pseudouridine-N3-)-methyltransferase activity"/>
    <property type="evidence" value="ECO:0007669"/>
    <property type="project" value="UniProtKB-UniRule"/>
</dbReference>
<dbReference type="CDD" id="cd18081">
    <property type="entry name" value="RlmH-like"/>
    <property type="match status" value="1"/>
</dbReference>
<dbReference type="Gene3D" id="3.40.1280.10">
    <property type="match status" value="1"/>
</dbReference>
<dbReference type="HAMAP" id="MF_00658">
    <property type="entry name" value="23SrRNA_methyltr_H"/>
    <property type="match status" value="1"/>
</dbReference>
<dbReference type="InterPro" id="IPR029028">
    <property type="entry name" value="Alpha/beta_knot_MTases"/>
</dbReference>
<dbReference type="InterPro" id="IPR003742">
    <property type="entry name" value="RlmH-like"/>
</dbReference>
<dbReference type="InterPro" id="IPR029026">
    <property type="entry name" value="tRNA_m1G_MTases_N"/>
</dbReference>
<dbReference type="NCBIfam" id="NF000986">
    <property type="entry name" value="PRK00103.1-4"/>
    <property type="match status" value="1"/>
</dbReference>
<dbReference type="NCBIfam" id="TIGR00246">
    <property type="entry name" value="tRNA_RlmH_YbeA"/>
    <property type="match status" value="1"/>
</dbReference>
<dbReference type="PANTHER" id="PTHR33603">
    <property type="entry name" value="METHYLTRANSFERASE"/>
    <property type="match status" value="1"/>
</dbReference>
<dbReference type="PANTHER" id="PTHR33603:SF1">
    <property type="entry name" value="RIBOSOMAL RNA LARGE SUBUNIT METHYLTRANSFERASE H"/>
    <property type="match status" value="1"/>
</dbReference>
<dbReference type="Pfam" id="PF02590">
    <property type="entry name" value="SPOUT_MTase"/>
    <property type="match status" value="1"/>
</dbReference>
<dbReference type="PIRSF" id="PIRSF004505">
    <property type="entry name" value="MT_bac"/>
    <property type="match status" value="1"/>
</dbReference>
<dbReference type="SUPFAM" id="SSF75217">
    <property type="entry name" value="alpha/beta knot"/>
    <property type="match status" value="1"/>
</dbReference>
<proteinExistence type="inferred from homology"/>
<keyword id="KW-0963">Cytoplasm</keyword>
<keyword id="KW-0489">Methyltransferase</keyword>
<keyword id="KW-0698">rRNA processing</keyword>
<keyword id="KW-0949">S-adenosyl-L-methionine</keyword>
<keyword id="KW-0808">Transferase</keyword>
<organism>
    <name type="scientific">Acinetobacter baylyi (strain ATCC 33305 / BD413 / ADP1)</name>
    <dbReference type="NCBI Taxonomy" id="62977"/>
    <lineage>
        <taxon>Bacteria</taxon>
        <taxon>Pseudomonadati</taxon>
        <taxon>Pseudomonadota</taxon>
        <taxon>Gammaproteobacteria</taxon>
        <taxon>Moraxellales</taxon>
        <taxon>Moraxellaceae</taxon>
        <taxon>Acinetobacter</taxon>
    </lineage>
</organism>
<name>RLMH_ACIAD</name>
<feature type="chain" id="PRO_0000198077" description="Ribosomal RNA large subunit methyltransferase H">
    <location>
        <begin position="1"/>
        <end position="159"/>
    </location>
</feature>
<feature type="binding site" evidence="1">
    <location>
        <position position="76"/>
    </location>
    <ligand>
        <name>S-adenosyl-L-methionine</name>
        <dbReference type="ChEBI" id="CHEBI:59789"/>
    </ligand>
</feature>
<feature type="binding site" evidence="1">
    <location>
        <position position="107"/>
    </location>
    <ligand>
        <name>S-adenosyl-L-methionine</name>
        <dbReference type="ChEBI" id="CHEBI:59789"/>
    </ligand>
</feature>
<feature type="binding site" evidence="1">
    <location>
        <begin position="126"/>
        <end position="131"/>
    </location>
    <ligand>
        <name>S-adenosyl-L-methionine</name>
        <dbReference type="ChEBI" id="CHEBI:59789"/>
    </ligand>
</feature>
<protein>
    <recommendedName>
        <fullName evidence="1">Ribosomal RNA large subunit methyltransferase H</fullName>
        <ecNumber evidence="1">2.1.1.177</ecNumber>
    </recommendedName>
    <alternativeName>
        <fullName evidence="1">23S rRNA (pseudouridine1915-N3)-methyltransferase</fullName>
    </alternativeName>
    <alternativeName>
        <fullName evidence="1">23S rRNA m3Psi1915 methyltransferase</fullName>
    </alternativeName>
    <alternativeName>
        <fullName evidence="1">rRNA (pseudouridine-N3-)-methyltransferase RlmH</fullName>
    </alternativeName>
</protein>
<gene>
    <name evidence="1" type="primary">rlmH</name>
    <name type="ordered locus">ACIAD1113</name>
</gene>
<comment type="function">
    <text evidence="1">Specifically methylates the pseudouridine at position 1915 (m3Psi1915) in 23S rRNA.</text>
</comment>
<comment type="catalytic activity">
    <reaction evidence="1">
        <text>pseudouridine(1915) in 23S rRNA + S-adenosyl-L-methionine = N(3)-methylpseudouridine(1915) in 23S rRNA + S-adenosyl-L-homocysteine + H(+)</text>
        <dbReference type="Rhea" id="RHEA:42752"/>
        <dbReference type="Rhea" id="RHEA-COMP:10221"/>
        <dbReference type="Rhea" id="RHEA-COMP:10222"/>
        <dbReference type="ChEBI" id="CHEBI:15378"/>
        <dbReference type="ChEBI" id="CHEBI:57856"/>
        <dbReference type="ChEBI" id="CHEBI:59789"/>
        <dbReference type="ChEBI" id="CHEBI:65314"/>
        <dbReference type="ChEBI" id="CHEBI:74486"/>
        <dbReference type="EC" id="2.1.1.177"/>
    </reaction>
</comment>
<comment type="subunit">
    <text evidence="1">Homodimer.</text>
</comment>
<comment type="subcellular location">
    <subcellularLocation>
        <location evidence="1">Cytoplasm</location>
    </subcellularLocation>
</comment>
<comment type="similarity">
    <text evidence="1">Belongs to the RNA methyltransferase RlmH family.</text>
</comment>